<dbReference type="EMBL" id="CH476596">
    <property type="protein sequence ID" value="EAU37550.1"/>
    <property type="molecule type" value="Genomic_DNA"/>
</dbReference>
<dbReference type="RefSeq" id="XP_001211766.1">
    <property type="nucleotide sequence ID" value="XM_001211766.1"/>
</dbReference>
<dbReference type="SMR" id="Q0CUP6"/>
<dbReference type="STRING" id="341663.Q0CUP6"/>
<dbReference type="EnsemblFungi" id="EAU37550">
    <property type="protein sequence ID" value="EAU37550"/>
    <property type="gene ID" value="ATEG_02588"/>
</dbReference>
<dbReference type="GeneID" id="4317119"/>
<dbReference type="VEuPathDB" id="FungiDB:ATEG_02588"/>
<dbReference type="eggNOG" id="KOG2072">
    <property type="taxonomic scope" value="Eukaryota"/>
</dbReference>
<dbReference type="HOGENOM" id="CLU_002096_2_1_1"/>
<dbReference type="OMA" id="EHITNKR"/>
<dbReference type="OrthoDB" id="18884at2759"/>
<dbReference type="Proteomes" id="UP000007963">
    <property type="component" value="Unassembled WGS sequence"/>
</dbReference>
<dbReference type="GO" id="GO:0010494">
    <property type="term" value="C:cytoplasmic stress granule"/>
    <property type="evidence" value="ECO:0007669"/>
    <property type="project" value="EnsemblFungi"/>
</dbReference>
<dbReference type="GO" id="GO:0016282">
    <property type="term" value="C:eukaryotic 43S preinitiation complex"/>
    <property type="evidence" value="ECO:0007669"/>
    <property type="project" value="UniProtKB-UniRule"/>
</dbReference>
<dbReference type="GO" id="GO:0033290">
    <property type="term" value="C:eukaryotic 48S preinitiation complex"/>
    <property type="evidence" value="ECO:0007669"/>
    <property type="project" value="UniProtKB-UniRule"/>
</dbReference>
<dbReference type="GO" id="GO:0071540">
    <property type="term" value="C:eukaryotic translation initiation factor 3 complex, eIF3e"/>
    <property type="evidence" value="ECO:0007669"/>
    <property type="project" value="EnsemblFungi"/>
</dbReference>
<dbReference type="GO" id="GO:0071541">
    <property type="term" value="C:eukaryotic translation initiation factor 3 complex, eIF3m"/>
    <property type="evidence" value="ECO:0007669"/>
    <property type="project" value="EnsemblFungi"/>
</dbReference>
<dbReference type="GO" id="GO:0043614">
    <property type="term" value="C:multi-eIF complex"/>
    <property type="evidence" value="ECO:0007669"/>
    <property type="project" value="TreeGrafter"/>
</dbReference>
<dbReference type="GO" id="GO:0003729">
    <property type="term" value="F:mRNA binding"/>
    <property type="evidence" value="ECO:0007669"/>
    <property type="project" value="TreeGrafter"/>
</dbReference>
<dbReference type="GO" id="GO:0003743">
    <property type="term" value="F:translation initiation factor activity"/>
    <property type="evidence" value="ECO:0007669"/>
    <property type="project" value="UniProtKB-UniRule"/>
</dbReference>
<dbReference type="GO" id="GO:0001732">
    <property type="term" value="P:formation of cytoplasmic translation initiation complex"/>
    <property type="evidence" value="ECO:0007669"/>
    <property type="project" value="UniProtKB-UniRule"/>
</dbReference>
<dbReference type="GO" id="GO:0002188">
    <property type="term" value="P:translation reinitiation"/>
    <property type="evidence" value="ECO:0007669"/>
    <property type="project" value="TreeGrafter"/>
</dbReference>
<dbReference type="FunFam" id="1.25.40.860:FF:000003">
    <property type="entry name" value="Eukaryotic translation initiation factor 3 subunit A"/>
    <property type="match status" value="1"/>
</dbReference>
<dbReference type="FunFam" id="1.25.40.860:FF:000005">
    <property type="entry name" value="Eukaryotic translation initiation factor 3 subunit A"/>
    <property type="match status" value="1"/>
</dbReference>
<dbReference type="FunFam" id="4.10.860.10:FF:000001">
    <property type="entry name" value="Eukaryotic translation initiation factor 3 subunit A"/>
    <property type="match status" value="1"/>
</dbReference>
<dbReference type="Gene3D" id="1.25.40.860">
    <property type="match status" value="2"/>
</dbReference>
<dbReference type="Gene3D" id="4.10.860.10">
    <property type="entry name" value="UVR domain"/>
    <property type="match status" value="1"/>
</dbReference>
<dbReference type="HAMAP" id="MF_03000">
    <property type="entry name" value="eIF3a"/>
    <property type="match status" value="1"/>
</dbReference>
<dbReference type="InterPro" id="IPR027512">
    <property type="entry name" value="EIF3A"/>
</dbReference>
<dbReference type="InterPro" id="IPR054711">
    <property type="entry name" value="eIF3a_PCI_TPR-like"/>
</dbReference>
<dbReference type="InterPro" id="IPR000717">
    <property type="entry name" value="PCI_dom"/>
</dbReference>
<dbReference type="PANTHER" id="PTHR14005:SF0">
    <property type="entry name" value="EUKARYOTIC TRANSLATION INITIATION FACTOR 3 SUBUNIT A"/>
    <property type="match status" value="1"/>
</dbReference>
<dbReference type="PANTHER" id="PTHR14005">
    <property type="entry name" value="EUKARYOTIC TRANSLATION INITIATION FACTOR 3, THETA SUBUNIT"/>
    <property type="match status" value="1"/>
</dbReference>
<dbReference type="Pfam" id="PF22591">
    <property type="entry name" value="eIF3a_PCI_TPR-like"/>
    <property type="match status" value="1"/>
</dbReference>
<dbReference type="Pfam" id="PF01399">
    <property type="entry name" value="PCI"/>
    <property type="match status" value="1"/>
</dbReference>
<dbReference type="SMART" id="SM00088">
    <property type="entry name" value="PINT"/>
    <property type="match status" value="1"/>
</dbReference>
<dbReference type="PROSITE" id="PS50250">
    <property type="entry name" value="PCI"/>
    <property type="match status" value="1"/>
</dbReference>
<name>EIF3A_ASPTN</name>
<comment type="function">
    <text evidence="1">RNA-binding component of the eukaryotic translation initiation factor 3 (eIF-3) complex, which is involved in protein synthesis of a specialized repertoire of mRNAs and, together with other initiation factors, stimulates binding of mRNA and methionyl-tRNAi to the 40S ribosome. The eIF-3 complex specifically targets and initiates translation of a subset of mRNAs involved in cell proliferation.</text>
</comment>
<comment type="subunit">
    <text evidence="1">Component of the eukaryotic translation initiation factor 3 (eIF-3) complex.</text>
</comment>
<comment type="subcellular location">
    <subcellularLocation>
        <location evidence="1">Cytoplasm</location>
    </subcellularLocation>
</comment>
<comment type="similarity">
    <text evidence="1">Belongs to the eIF-3 subunit A family.</text>
</comment>
<sequence length="1040" mass="118858">MPPPPHIKPENVLKRAQELIAVGQAPAALNVLHEHVTSKRTRSSPISSLEPVMLQIVELCVDMRKGKAAKDGLYQYKNIAQNTNVGTIEVVLKKFIELAEKKVTEAQTKADEIQSSLESAAPSANVEDLEAIETPETILLATVSGEQSRDRTDRAVVTPWLKFLWETYRTVLEILKNNARLEVMYQTTALQAFQFCLKYTRKTEFRRLCELLRNHVQNAAKYSAQMHAINLSDPDTLQRHLDTRFQQLNVAVELELWQEAFRSIEDIHTLLSLSKRPAKNVMMANYYEKLARIFLVSENYLFHAAAWSRYYNLLRQSAATLAAGQGTKKENPSVTEADMTKAASFVLLSALAIPVISTSRSRGALVDVDEVRKNKNTRLTNLLGMAQPPTRAVLFKDAMNKGLLKRARPEIRELYNILEVDFHPLSICKKITPILKQIGSDPEMEKYVVPLQQVILTRLFQQLSQVYESVELKFVYELAQFPDPFQITPAMIEKFIMNGCKKGDLAIRVDHISGVLTFDSDVFSSAKALHPGSAAGSAESEVGSVQRLQNTPAEIARLQLTRLAKTLHVSCMYVDPSYNESRIQAKQTAQARALAGAAKEHEETLARRVIIEKKKEAATDALQRKQREEETRKRIRTQQLQEAEKQRLLDEQREREKKRIKDEQDRIRQQELKKQLEELKSGVKGIDINEIDLQDLDANRLRAMKLAQLEKEKNELNDRIRTTGKRIDHLERAFRREELKHIPEDYEAQKKRDMEIYEATKAETLKEAELKHKEAVALKHRLSRLVPHFNSFRKEVSEKRHEEFEKRRKAAERDFEAKKKQRVKEVQERRRREKMEREMAERQRKEEEERAQREEEEKRARDEERRRVLAEEKAKREEERKRLDEIAAKQKQREEEAEARRAARKAGLEPAAPAARPEPTERTAPRLNIAPRTGGPSWRERQAAKEAAGGAAPEAAPKEEAPQPARRPGGYVPPHLRSGSSAAPAAPPSNGAPERYVPRHARESSSSQPPSRTQTPGSDKPSEGGSAGKWVPRWKQQQNQ</sequence>
<accession>Q0CUP6</accession>
<evidence type="ECO:0000255" key="1">
    <source>
        <dbReference type="HAMAP-Rule" id="MF_03000"/>
    </source>
</evidence>
<evidence type="ECO:0000255" key="2">
    <source>
        <dbReference type="PROSITE-ProRule" id="PRU01185"/>
    </source>
</evidence>
<evidence type="ECO:0000256" key="3">
    <source>
        <dbReference type="SAM" id="MobiDB-lite"/>
    </source>
</evidence>
<gene>
    <name type="primary">tif32</name>
    <name type="ORF">ATEG_02588</name>
</gene>
<organism>
    <name type="scientific">Aspergillus terreus (strain NIH 2624 / FGSC A1156)</name>
    <dbReference type="NCBI Taxonomy" id="341663"/>
    <lineage>
        <taxon>Eukaryota</taxon>
        <taxon>Fungi</taxon>
        <taxon>Dikarya</taxon>
        <taxon>Ascomycota</taxon>
        <taxon>Pezizomycotina</taxon>
        <taxon>Eurotiomycetes</taxon>
        <taxon>Eurotiomycetidae</taxon>
        <taxon>Eurotiales</taxon>
        <taxon>Aspergillaceae</taxon>
        <taxon>Aspergillus</taxon>
        <taxon>Aspergillus subgen. Circumdati</taxon>
    </lineage>
</organism>
<proteinExistence type="inferred from homology"/>
<feature type="chain" id="PRO_0000366355" description="Eukaryotic translation initiation factor 3 subunit A">
    <location>
        <begin position="1"/>
        <end position="1040"/>
    </location>
</feature>
<feature type="domain" description="PCI" evidence="2">
    <location>
        <begin position="339"/>
        <end position="523"/>
    </location>
</feature>
<feature type="region of interest" description="Disordered" evidence="3">
    <location>
        <begin position="617"/>
        <end position="641"/>
    </location>
</feature>
<feature type="region of interest" description="Disordered" evidence="3">
    <location>
        <begin position="795"/>
        <end position="1040"/>
    </location>
</feature>
<feature type="coiled-coil region" evidence="1">
    <location>
        <begin position="92"/>
        <end position="121"/>
    </location>
</feature>
<feature type="coiled-coil region" evidence="1">
    <location>
        <begin position="608"/>
        <end position="906"/>
    </location>
</feature>
<feature type="compositionally biased region" description="Basic and acidic residues" evidence="3">
    <location>
        <begin position="617"/>
        <end position="632"/>
    </location>
</feature>
<feature type="compositionally biased region" description="Basic and acidic residues" evidence="3">
    <location>
        <begin position="795"/>
        <end position="901"/>
    </location>
</feature>
<feature type="compositionally biased region" description="Low complexity" evidence="3">
    <location>
        <begin position="908"/>
        <end position="917"/>
    </location>
</feature>
<feature type="compositionally biased region" description="Low complexity" evidence="3">
    <location>
        <begin position="945"/>
        <end position="955"/>
    </location>
</feature>
<feature type="compositionally biased region" description="Low complexity" evidence="3">
    <location>
        <begin position="978"/>
        <end position="993"/>
    </location>
</feature>
<feature type="compositionally biased region" description="Low complexity" evidence="3">
    <location>
        <begin position="1004"/>
        <end position="1018"/>
    </location>
</feature>
<reference key="1">
    <citation type="submission" date="2005-09" db="EMBL/GenBank/DDBJ databases">
        <title>Annotation of the Aspergillus terreus NIH2624 genome.</title>
        <authorList>
            <person name="Birren B.W."/>
            <person name="Lander E.S."/>
            <person name="Galagan J.E."/>
            <person name="Nusbaum C."/>
            <person name="Devon K."/>
            <person name="Henn M."/>
            <person name="Ma L.-J."/>
            <person name="Jaffe D.B."/>
            <person name="Butler J."/>
            <person name="Alvarez P."/>
            <person name="Gnerre S."/>
            <person name="Grabherr M."/>
            <person name="Kleber M."/>
            <person name="Mauceli E.W."/>
            <person name="Brockman W."/>
            <person name="Rounsley S."/>
            <person name="Young S.K."/>
            <person name="LaButti K."/>
            <person name="Pushparaj V."/>
            <person name="DeCaprio D."/>
            <person name="Crawford M."/>
            <person name="Koehrsen M."/>
            <person name="Engels R."/>
            <person name="Montgomery P."/>
            <person name="Pearson M."/>
            <person name="Howarth C."/>
            <person name="Larson L."/>
            <person name="Luoma S."/>
            <person name="White J."/>
            <person name="Alvarado L."/>
            <person name="Kodira C.D."/>
            <person name="Zeng Q."/>
            <person name="Oleary S."/>
            <person name="Yandava C."/>
            <person name="Denning D.W."/>
            <person name="Nierman W.C."/>
            <person name="Milne T."/>
            <person name="Madden K."/>
        </authorList>
    </citation>
    <scope>NUCLEOTIDE SEQUENCE [LARGE SCALE GENOMIC DNA]</scope>
    <source>
        <strain>NIH 2624 / FGSC A1156</strain>
    </source>
</reference>
<protein>
    <recommendedName>
        <fullName evidence="1">Eukaryotic translation initiation factor 3 subunit A</fullName>
        <shortName evidence="1">eIF3a</shortName>
    </recommendedName>
    <alternativeName>
        <fullName evidence="1">Eukaryotic translation initiation factor 3 110 kDa subunit homolog</fullName>
        <shortName evidence="1">eIF3 p110</shortName>
    </alternativeName>
    <alternativeName>
        <fullName evidence="1">Translation initiation factor eIF3, p110 subunit homolog</fullName>
    </alternativeName>
</protein>
<keyword id="KW-0175">Coiled coil</keyword>
<keyword id="KW-0963">Cytoplasm</keyword>
<keyword id="KW-0396">Initiation factor</keyword>
<keyword id="KW-0648">Protein biosynthesis</keyword>
<keyword id="KW-1185">Reference proteome</keyword>
<keyword id="KW-0694">RNA-binding</keyword>